<feature type="chain" id="PRO_1000010710" description="Elongation factor P">
    <location>
        <begin position="1"/>
        <end position="189"/>
    </location>
</feature>
<proteinExistence type="inferred from homology"/>
<comment type="function">
    <text evidence="1">Involved in peptide bond synthesis. Stimulates efficient translation and peptide-bond synthesis on native or reconstituted 70S ribosomes in vitro. Probably functions indirectly by altering the affinity of the ribosome for aminoacyl-tRNA, thus increasing their reactivity as acceptors for peptidyl transferase.</text>
</comment>
<comment type="pathway">
    <text evidence="1">Protein biosynthesis; polypeptide chain elongation.</text>
</comment>
<comment type="subcellular location">
    <subcellularLocation>
        <location evidence="1">Cytoplasm</location>
    </subcellularLocation>
</comment>
<comment type="similarity">
    <text evidence="1">Belongs to the elongation factor P family.</text>
</comment>
<evidence type="ECO:0000255" key="1">
    <source>
        <dbReference type="HAMAP-Rule" id="MF_00141"/>
    </source>
</evidence>
<name>EFP_CAMJJ</name>
<sequence length="189" mass="21098">MASYSMGDLKKGLKIEIDGIPFKIVEYQHVKPGKGPAFVRIKIKSFIDGKVLEKTFHAGDKCEAPNLEDKTMQYLYDDGENCQFMDTQTYEQVAISDDDVGEAKKWMLDGMMVDVLFHNGKAIGVEVPQVVELKIIETAPNFKGDTQGSNKKPATLETGAVVQIPFHVLEGEVIRVDTVRGEYIERANK</sequence>
<protein>
    <recommendedName>
        <fullName evidence="1">Elongation factor P</fullName>
        <shortName evidence="1">EF-P</shortName>
    </recommendedName>
</protein>
<keyword id="KW-0963">Cytoplasm</keyword>
<keyword id="KW-0251">Elongation factor</keyword>
<keyword id="KW-0648">Protein biosynthesis</keyword>
<accession>A1VYR0</accession>
<reference key="1">
    <citation type="submission" date="2006-12" db="EMBL/GenBank/DDBJ databases">
        <authorList>
            <person name="Fouts D.E."/>
            <person name="Nelson K.E."/>
            <person name="Sebastian Y."/>
        </authorList>
    </citation>
    <scope>NUCLEOTIDE SEQUENCE [LARGE SCALE GENOMIC DNA]</scope>
    <source>
        <strain>81-176</strain>
    </source>
</reference>
<gene>
    <name evidence="1" type="primary">efp</name>
    <name type="ordered locus">CJJ81176_0576</name>
</gene>
<organism>
    <name type="scientific">Campylobacter jejuni subsp. jejuni serotype O:23/36 (strain 81-176)</name>
    <dbReference type="NCBI Taxonomy" id="354242"/>
    <lineage>
        <taxon>Bacteria</taxon>
        <taxon>Pseudomonadati</taxon>
        <taxon>Campylobacterota</taxon>
        <taxon>Epsilonproteobacteria</taxon>
        <taxon>Campylobacterales</taxon>
        <taxon>Campylobacteraceae</taxon>
        <taxon>Campylobacter</taxon>
    </lineage>
</organism>
<dbReference type="EMBL" id="CP000538">
    <property type="protein sequence ID" value="EAQ73320.1"/>
    <property type="molecule type" value="Genomic_DNA"/>
</dbReference>
<dbReference type="RefSeq" id="WP_002855210.1">
    <property type="nucleotide sequence ID" value="NC_008787.1"/>
</dbReference>
<dbReference type="SMR" id="A1VYR0"/>
<dbReference type="KEGG" id="cjj:CJJ81176_0576"/>
<dbReference type="eggNOG" id="COG0231">
    <property type="taxonomic scope" value="Bacteria"/>
</dbReference>
<dbReference type="HOGENOM" id="CLU_074944_0_1_7"/>
<dbReference type="UniPathway" id="UPA00345"/>
<dbReference type="Proteomes" id="UP000000646">
    <property type="component" value="Chromosome"/>
</dbReference>
<dbReference type="GO" id="GO:0005737">
    <property type="term" value="C:cytoplasm"/>
    <property type="evidence" value="ECO:0007669"/>
    <property type="project" value="UniProtKB-SubCell"/>
</dbReference>
<dbReference type="GO" id="GO:0003746">
    <property type="term" value="F:translation elongation factor activity"/>
    <property type="evidence" value="ECO:0007669"/>
    <property type="project" value="UniProtKB-UniRule"/>
</dbReference>
<dbReference type="GO" id="GO:0043043">
    <property type="term" value="P:peptide biosynthetic process"/>
    <property type="evidence" value="ECO:0007669"/>
    <property type="project" value="InterPro"/>
</dbReference>
<dbReference type="CDD" id="cd04470">
    <property type="entry name" value="S1_EF-P_repeat_1"/>
    <property type="match status" value="1"/>
</dbReference>
<dbReference type="CDD" id="cd05794">
    <property type="entry name" value="S1_EF-P_repeat_2"/>
    <property type="match status" value="1"/>
</dbReference>
<dbReference type="FunFam" id="2.30.30.30:FF:000003">
    <property type="entry name" value="Elongation factor P"/>
    <property type="match status" value="1"/>
</dbReference>
<dbReference type="FunFam" id="2.40.50.140:FF:000004">
    <property type="entry name" value="Elongation factor P"/>
    <property type="match status" value="1"/>
</dbReference>
<dbReference type="FunFam" id="2.40.50.140:FF:000009">
    <property type="entry name" value="Elongation factor P"/>
    <property type="match status" value="1"/>
</dbReference>
<dbReference type="Gene3D" id="2.30.30.30">
    <property type="match status" value="1"/>
</dbReference>
<dbReference type="Gene3D" id="2.40.50.140">
    <property type="entry name" value="Nucleic acid-binding proteins"/>
    <property type="match status" value="2"/>
</dbReference>
<dbReference type="HAMAP" id="MF_00141">
    <property type="entry name" value="EF_P"/>
    <property type="match status" value="1"/>
</dbReference>
<dbReference type="InterPro" id="IPR015365">
    <property type="entry name" value="Elong-fact-P_C"/>
</dbReference>
<dbReference type="InterPro" id="IPR012340">
    <property type="entry name" value="NA-bd_OB-fold"/>
</dbReference>
<dbReference type="InterPro" id="IPR014722">
    <property type="entry name" value="Rib_uL2_dom2"/>
</dbReference>
<dbReference type="InterPro" id="IPR020599">
    <property type="entry name" value="Transl_elong_fac_P/YeiP"/>
</dbReference>
<dbReference type="InterPro" id="IPR013185">
    <property type="entry name" value="Transl_elong_KOW-like"/>
</dbReference>
<dbReference type="InterPro" id="IPR001059">
    <property type="entry name" value="Transl_elong_P/YeiP_cen"/>
</dbReference>
<dbReference type="InterPro" id="IPR011768">
    <property type="entry name" value="Transl_elongation_fac_P"/>
</dbReference>
<dbReference type="InterPro" id="IPR008991">
    <property type="entry name" value="Translation_prot_SH3-like_sf"/>
</dbReference>
<dbReference type="NCBIfam" id="TIGR00038">
    <property type="entry name" value="efp"/>
    <property type="match status" value="1"/>
</dbReference>
<dbReference type="NCBIfam" id="NF001810">
    <property type="entry name" value="PRK00529.1"/>
    <property type="match status" value="1"/>
</dbReference>
<dbReference type="PANTHER" id="PTHR30053">
    <property type="entry name" value="ELONGATION FACTOR P"/>
    <property type="match status" value="1"/>
</dbReference>
<dbReference type="PANTHER" id="PTHR30053:SF12">
    <property type="entry name" value="ELONGATION FACTOR P (EF-P) FAMILY PROTEIN"/>
    <property type="match status" value="1"/>
</dbReference>
<dbReference type="Pfam" id="PF01132">
    <property type="entry name" value="EFP"/>
    <property type="match status" value="1"/>
</dbReference>
<dbReference type="Pfam" id="PF08207">
    <property type="entry name" value="EFP_N"/>
    <property type="match status" value="1"/>
</dbReference>
<dbReference type="Pfam" id="PF09285">
    <property type="entry name" value="Elong-fact-P_C"/>
    <property type="match status" value="1"/>
</dbReference>
<dbReference type="PIRSF" id="PIRSF005901">
    <property type="entry name" value="EF-P"/>
    <property type="match status" value="1"/>
</dbReference>
<dbReference type="SMART" id="SM01185">
    <property type="entry name" value="EFP"/>
    <property type="match status" value="1"/>
</dbReference>
<dbReference type="SMART" id="SM00841">
    <property type="entry name" value="Elong-fact-P_C"/>
    <property type="match status" value="1"/>
</dbReference>
<dbReference type="SUPFAM" id="SSF50249">
    <property type="entry name" value="Nucleic acid-binding proteins"/>
    <property type="match status" value="2"/>
</dbReference>
<dbReference type="SUPFAM" id="SSF50104">
    <property type="entry name" value="Translation proteins SH3-like domain"/>
    <property type="match status" value="1"/>
</dbReference>